<proteinExistence type="uncertain"/>
<sequence>MKSKVSPSFHFFIFFFLFCLLRTLDYNTYNTNHNDTYMHIKLFFSYYFRFVHLFFFLYYAHLRTTKHYHTLLIQYYPFEMHWSKDLAQRPSSLRLRYFPAYLKRCCYHPMQN</sequence>
<name>YIL20_YEAST</name>
<comment type="subcellular location">
    <subcellularLocation>
        <location evidence="1">Membrane</location>
        <topology evidence="1">Multi-pass membrane protein</topology>
    </subcellularLocation>
</comment>
<comment type="miscellaneous">
    <text evidence="2">Partially overlaps RPB3.</text>
</comment>
<comment type="caution">
    <text evidence="3">Product of a dubious gene prediction unlikely to encode a functional protein. Because of that it is not part of the S.cerevisiae S288c complete/reference proteome set.</text>
</comment>
<evidence type="ECO:0000255" key="1"/>
<evidence type="ECO:0000305" key="2"/>
<evidence type="ECO:0000305" key="3">
    <source>
    </source>
</evidence>
<evidence type="ECO:0000312" key="4">
    <source>
        <dbReference type="SGD" id="S000028787"/>
    </source>
</evidence>
<gene>
    <name evidence="4" type="ordered locus">YIL020C-A</name>
</gene>
<dbReference type="EMBL" id="KJ412267">
    <property type="protein sequence ID" value="AHX39310.1"/>
    <property type="molecule type" value="Genomic_DNA"/>
</dbReference>
<dbReference type="PaxDb" id="4932-YIL020C-A"/>
<dbReference type="EnsemblFungi" id="YIL020C-A_mRNA">
    <property type="protein sequence ID" value="YIL020C-A"/>
    <property type="gene ID" value="YIL020C-A"/>
</dbReference>
<dbReference type="AGR" id="SGD:S000028787"/>
<dbReference type="SGD" id="S000028787">
    <property type="gene designation" value="YIL020C-A"/>
</dbReference>
<dbReference type="HOGENOM" id="CLU_2147303_0_0_1"/>
<dbReference type="GO" id="GO:0016020">
    <property type="term" value="C:membrane"/>
    <property type="evidence" value="ECO:0007669"/>
    <property type="project" value="UniProtKB-SubCell"/>
</dbReference>
<keyword id="KW-0472">Membrane</keyword>
<keyword id="KW-0812">Transmembrane</keyword>
<keyword id="KW-1133">Transmembrane helix</keyword>
<protein>
    <recommendedName>
        <fullName evidence="2">Putative uncharacterized protein YIL020C-A</fullName>
    </recommendedName>
</protein>
<accession>A0A023PXM7</accession>
<organism>
    <name type="scientific">Saccharomyces cerevisiae (strain ATCC 204508 / S288c)</name>
    <name type="common">Baker's yeast</name>
    <dbReference type="NCBI Taxonomy" id="559292"/>
    <lineage>
        <taxon>Eukaryota</taxon>
        <taxon>Fungi</taxon>
        <taxon>Dikarya</taxon>
        <taxon>Ascomycota</taxon>
        <taxon>Saccharomycotina</taxon>
        <taxon>Saccharomycetes</taxon>
        <taxon>Saccharomycetales</taxon>
        <taxon>Saccharomycetaceae</taxon>
        <taxon>Saccharomyces</taxon>
    </lineage>
</organism>
<feature type="chain" id="PRO_0000431043" description="Putative uncharacterized protein YIL020C-A">
    <location>
        <begin position="1"/>
        <end position="112"/>
    </location>
</feature>
<feature type="transmembrane region" description="Helical; Name=1" evidence="1">
    <location>
        <begin position="7"/>
        <end position="26"/>
    </location>
</feature>
<feature type="transmembrane region" description="Helical; Name=2" evidence="1">
    <location>
        <begin position="36"/>
        <end position="58"/>
    </location>
</feature>
<reference key="1">
    <citation type="journal article" date="1997" name="Nature">
        <title>The nucleotide sequence of Saccharomyces cerevisiae chromosome IX.</title>
        <authorList>
            <person name="Churcher C.M."/>
            <person name="Bowman S."/>
            <person name="Badcock K."/>
            <person name="Bankier A.T."/>
            <person name="Brown D."/>
            <person name="Chillingworth T."/>
            <person name="Connor R."/>
            <person name="Devlin K."/>
            <person name="Gentles S."/>
            <person name="Hamlin N."/>
            <person name="Harris D.E."/>
            <person name="Horsnell T."/>
            <person name="Hunt S."/>
            <person name="Jagels K."/>
            <person name="Jones M."/>
            <person name="Lye G."/>
            <person name="Moule S."/>
            <person name="Odell C."/>
            <person name="Pearson D."/>
            <person name="Rajandream M.A."/>
            <person name="Rice P."/>
            <person name="Rowley N."/>
            <person name="Skelton J."/>
            <person name="Smith V."/>
            <person name="Walsh S.V."/>
            <person name="Whitehead S."/>
            <person name="Barrell B.G."/>
        </authorList>
    </citation>
    <scope>NUCLEOTIDE SEQUENCE [LARGE SCALE GENOMIC DNA]</scope>
    <source>
        <strain>ATCC 204508 / S288c</strain>
    </source>
</reference>
<reference key="2">
    <citation type="journal article" date="2014" name="G3 (Bethesda)">
        <title>The reference genome sequence of Saccharomyces cerevisiae: Then and now.</title>
        <authorList>
            <person name="Engel S.R."/>
            <person name="Dietrich F.S."/>
            <person name="Fisk D.G."/>
            <person name="Binkley G."/>
            <person name="Balakrishnan R."/>
            <person name="Costanzo M.C."/>
            <person name="Dwight S.S."/>
            <person name="Hitz B.C."/>
            <person name="Karra K."/>
            <person name="Nash R.S."/>
            <person name="Weng S."/>
            <person name="Wong E.D."/>
            <person name="Lloyd P."/>
            <person name="Skrzypek M.S."/>
            <person name="Miyasato S.R."/>
            <person name="Simison M."/>
            <person name="Cherry J.M."/>
        </authorList>
    </citation>
    <scope>GENOME REANNOTATION</scope>
    <source>
        <strain>ATCC 204508 / S288c</strain>
    </source>
</reference>